<feature type="chain" id="PRO_0000340471" description="Urease accessory protein UreD">
    <location>
        <begin position="1"/>
        <end position="276"/>
    </location>
</feature>
<gene>
    <name evidence="1" type="primary">ureD</name>
    <name type="ordered locus">Pnap_1004</name>
</gene>
<dbReference type="EMBL" id="CP000529">
    <property type="protein sequence ID" value="ABM36321.1"/>
    <property type="molecule type" value="Genomic_DNA"/>
</dbReference>
<dbReference type="RefSeq" id="WP_011800415.1">
    <property type="nucleotide sequence ID" value="NC_008781.1"/>
</dbReference>
<dbReference type="SMR" id="A1VKZ3"/>
<dbReference type="STRING" id="365044.Pnap_1004"/>
<dbReference type="KEGG" id="pna:Pnap_1004"/>
<dbReference type="eggNOG" id="COG0829">
    <property type="taxonomic scope" value="Bacteria"/>
</dbReference>
<dbReference type="HOGENOM" id="CLU_056339_0_0_4"/>
<dbReference type="OrthoDB" id="9798842at2"/>
<dbReference type="Proteomes" id="UP000000644">
    <property type="component" value="Chromosome"/>
</dbReference>
<dbReference type="GO" id="GO:0005737">
    <property type="term" value="C:cytoplasm"/>
    <property type="evidence" value="ECO:0007669"/>
    <property type="project" value="UniProtKB-SubCell"/>
</dbReference>
<dbReference type="GO" id="GO:0016151">
    <property type="term" value="F:nickel cation binding"/>
    <property type="evidence" value="ECO:0007669"/>
    <property type="project" value="UniProtKB-UniRule"/>
</dbReference>
<dbReference type="HAMAP" id="MF_01384">
    <property type="entry name" value="UreD"/>
    <property type="match status" value="1"/>
</dbReference>
<dbReference type="InterPro" id="IPR002669">
    <property type="entry name" value="UreD"/>
</dbReference>
<dbReference type="PANTHER" id="PTHR33643">
    <property type="entry name" value="UREASE ACCESSORY PROTEIN D"/>
    <property type="match status" value="1"/>
</dbReference>
<dbReference type="PANTHER" id="PTHR33643:SF1">
    <property type="entry name" value="UREASE ACCESSORY PROTEIN D"/>
    <property type="match status" value="1"/>
</dbReference>
<dbReference type="Pfam" id="PF01774">
    <property type="entry name" value="UreD"/>
    <property type="match status" value="1"/>
</dbReference>
<reference key="1">
    <citation type="journal article" date="2009" name="Environ. Microbiol.">
        <title>The genome of Polaromonas naphthalenivorans strain CJ2, isolated from coal tar-contaminated sediment, reveals physiological and metabolic versatility and evolution through extensive horizontal gene transfer.</title>
        <authorList>
            <person name="Yagi J.M."/>
            <person name="Sims D."/>
            <person name="Brettin T."/>
            <person name="Bruce D."/>
            <person name="Madsen E.L."/>
        </authorList>
    </citation>
    <scope>NUCLEOTIDE SEQUENCE [LARGE SCALE GENOMIC DNA]</scope>
    <source>
        <strain>CJ2</strain>
    </source>
</reference>
<name>URED_POLNA</name>
<evidence type="ECO:0000255" key="1">
    <source>
        <dbReference type="HAMAP-Rule" id="MF_01384"/>
    </source>
</evidence>
<proteinExistence type="inferred from homology"/>
<organism>
    <name type="scientific">Polaromonas naphthalenivorans (strain CJ2)</name>
    <dbReference type="NCBI Taxonomy" id="365044"/>
    <lineage>
        <taxon>Bacteria</taxon>
        <taxon>Pseudomonadati</taxon>
        <taxon>Pseudomonadota</taxon>
        <taxon>Betaproteobacteria</taxon>
        <taxon>Burkholderiales</taxon>
        <taxon>Comamonadaceae</taxon>
        <taxon>Polaromonas</taxon>
    </lineage>
</organism>
<accession>A1VKZ3</accession>
<keyword id="KW-0143">Chaperone</keyword>
<keyword id="KW-0963">Cytoplasm</keyword>
<keyword id="KW-0996">Nickel insertion</keyword>
<keyword id="KW-1185">Reference proteome</keyword>
<comment type="function">
    <text evidence="1">Required for maturation of urease via the functional incorporation of the urease nickel metallocenter.</text>
</comment>
<comment type="subunit">
    <text evidence="1">UreD, UreF and UreG form a complex that acts as a GTP-hydrolysis-dependent molecular chaperone, activating the urease apoprotein by helping to assemble the nickel containing metallocenter of UreC. The UreE protein probably delivers the nickel.</text>
</comment>
<comment type="subcellular location">
    <subcellularLocation>
        <location evidence="1">Cytoplasm</location>
    </subcellularLocation>
</comment>
<comment type="similarity">
    <text evidence="1">Belongs to the UreD family.</text>
</comment>
<sequence>MTWNATLALDYTRQAEKTVAHFRHSGPLRILQSLYPEGDGICHNVIVHPPGGLVGGDTLDLAFTAGAGAHGLVTTPGATRFYRSTGEPALQRTRLSLEAGARMEWLPLEAICYSGCLAENRLTMELASGAELIGWDVTAFGLPAASLPFAHGHFCQHIEMPGVWLERARIAAGDTLLMDSPLGLAGQRCMASIFFVAGSKLERNRRQQALDVAREVIEAHALRATAGATSPDGQVVVVRVLAPLVEPAMTLLRQVWQAWRSHFWQQPAALPRIWSM</sequence>
<protein>
    <recommendedName>
        <fullName evidence="1">Urease accessory protein UreD</fullName>
    </recommendedName>
</protein>